<name>ARGR_SHIDS</name>
<reference key="1">
    <citation type="journal article" date="2005" name="Nucleic Acids Res.">
        <title>Genome dynamics and diversity of Shigella species, the etiologic agents of bacillary dysentery.</title>
        <authorList>
            <person name="Yang F."/>
            <person name="Yang J."/>
            <person name="Zhang X."/>
            <person name="Chen L."/>
            <person name="Jiang Y."/>
            <person name="Yan Y."/>
            <person name="Tang X."/>
            <person name="Wang J."/>
            <person name="Xiong Z."/>
            <person name="Dong J."/>
            <person name="Xue Y."/>
            <person name="Zhu Y."/>
            <person name="Xu X."/>
            <person name="Sun L."/>
            <person name="Chen S."/>
            <person name="Nie H."/>
            <person name="Peng J."/>
            <person name="Xu J."/>
            <person name="Wang Y."/>
            <person name="Yuan Z."/>
            <person name="Wen Y."/>
            <person name="Yao Z."/>
            <person name="Shen Y."/>
            <person name="Qiang B."/>
            <person name="Hou Y."/>
            <person name="Yu J."/>
            <person name="Jin Q."/>
        </authorList>
    </citation>
    <scope>NUCLEOTIDE SEQUENCE [LARGE SCALE GENOMIC DNA]</scope>
    <source>
        <strain>Sd197</strain>
    </source>
</reference>
<gene>
    <name evidence="1" type="primary">argR</name>
    <name type="ordered locus">SDY_3413</name>
</gene>
<proteinExistence type="inferred from homology"/>
<sequence>MRSSAKQEELVKAFKALLKEEKFSSQGEIVAALQEQGFDNINQSKVSRMLTKFGAVRTRNAKMEMVYCLPAELGVPTTSSPLKNLVLDIDYNDAVVVIHTSPGAAQLIARLLDSLGKAEGILGTIAGDDTIFTTPANGFTVKDLYEAILELFDQEL</sequence>
<protein>
    <recommendedName>
        <fullName evidence="1">Arginine repressor</fullName>
    </recommendedName>
</protein>
<keyword id="KW-0028">Amino-acid biosynthesis</keyword>
<keyword id="KW-0055">Arginine biosynthesis</keyword>
<keyword id="KW-0963">Cytoplasm</keyword>
<keyword id="KW-0238">DNA-binding</keyword>
<keyword id="KW-1185">Reference proteome</keyword>
<keyword id="KW-0678">Repressor</keyword>
<keyword id="KW-0804">Transcription</keyword>
<keyword id="KW-0805">Transcription regulation</keyword>
<accession>Q32BA2</accession>
<organism>
    <name type="scientific">Shigella dysenteriae serotype 1 (strain Sd197)</name>
    <dbReference type="NCBI Taxonomy" id="300267"/>
    <lineage>
        <taxon>Bacteria</taxon>
        <taxon>Pseudomonadati</taxon>
        <taxon>Pseudomonadota</taxon>
        <taxon>Gammaproteobacteria</taxon>
        <taxon>Enterobacterales</taxon>
        <taxon>Enterobacteriaceae</taxon>
        <taxon>Shigella</taxon>
    </lineage>
</organism>
<dbReference type="EMBL" id="CP000034">
    <property type="protein sequence ID" value="ABB63403.1"/>
    <property type="molecule type" value="Genomic_DNA"/>
</dbReference>
<dbReference type="RefSeq" id="WP_001257846.1">
    <property type="nucleotide sequence ID" value="NC_007606.1"/>
</dbReference>
<dbReference type="RefSeq" id="YP_404894.1">
    <property type="nucleotide sequence ID" value="NC_007606.1"/>
</dbReference>
<dbReference type="SMR" id="Q32BA2"/>
<dbReference type="STRING" id="300267.SDY_3413"/>
<dbReference type="EnsemblBacteria" id="ABB63403">
    <property type="protein sequence ID" value="ABB63403"/>
    <property type="gene ID" value="SDY_3413"/>
</dbReference>
<dbReference type="GeneID" id="93778748"/>
<dbReference type="KEGG" id="sdy:SDY_3413"/>
<dbReference type="PATRIC" id="fig|300267.13.peg.4071"/>
<dbReference type="HOGENOM" id="CLU_097103_2_0_6"/>
<dbReference type="UniPathway" id="UPA00068"/>
<dbReference type="Proteomes" id="UP000002716">
    <property type="component" value="Chromosome"/>
</dbReference>
<dbReference type="GO" id="GO:0005737">
    <property type="term" value="C:cytoplasm"/>
    <property type="evidence" value="ECO:0007669"/>
    <property type="project" value="UniProtKB-SubCell"/>
</dbReference>
<dbReference type="GO" id="GO:0034618">
    <property type="term" value="F:arginine binding"/>
    <property type="evidence" value="ECO:0007669"/>
    <property type="project" value="InterPro"/>
</dbReference>
<dbReference type="GO" id="GO:0003677">
    <property type="term" value="F:DNA binding"/>
    <property type="evidence" value="ECO:0007669"/>
    <property type="project" value="UniProtKB-KW"/>
</dbReference>
<dbReference type="GO" id="GO:0003700">
    <property type="term" value="F:DNA-binding transcription factor activity"/>
    <property type="evidence" value="ECO:0007669"/>
    <property type="project" value="UniProtKB-UniRule"/>
</dbReference>
<dbReference type="GO" id="GO:0006526">
    <property type="term" value="P:L-arginine biosynthetic process"/>
    <property type="evidence" value="ECO:0007669"/>
    <property type="project" value="UniProtKB-UniPathway"/>
</dbReference>
<dbReference type="GO" id="GO:0051259">
    <property type="term" value="P:protein complex oligomerization"/>
    <property type="evidence" value="ECO:0007669"/>
    <property type="project" value="InterPro"/>
</dbReference>
<dbReference type="GO" id="GO:1900079">
    <property type="term" value="P:regulation of arginine biosynthetic process"/>
    <property type="evidence" value="ECO:0007669"/>
    <property type="project" value="UniProtKB-UniRule"/>
</dbReference>
<dbReference type="FunFam" id="1.10.10.10:FF:000074">
    <property type="entry name" value="Arginine repressor"/>
    <property type="match status" value="1"/>
</dbReference>
<dbReference type="FunFam" id="3.30.1360.40:FF:000004">
    <property type="entry name" value="Arginine repressor"/>
    <property type="match status" value="1"/>
</dbReference>
<dbReference type="Gene3D" id="3.30.1360.40">
    <property type="match status" value="1"/>
</dbReference>
<dbReference type="Gene3D" id="1.10.10.10">
    <property type="entry name" value="Winged helix-like DNA-binding domain superfamily/Winged helix DNA-binding domain"/>
    <property type="match status" value="1"/>
</dbReference>
<dbReference type="HAMAP" id="MF_00173">
    <property type="entry name" value="Arg_repressor"/>
    <property type="match status" value="1"/>
</dbReference>
<dbReference type="InterPro" id="IPR001669">
    <property type="entry name" value="Arg_repress"/>
</dbReference>
<dbReference type="InterPro" id="IPR020899">
    <property type="entry name" value="Arg_repress_C"/>
</dbReference>
<dbReference type="InterPro" id="IPR036251">
    <property type="entry name" value="Arg_repress_C_sf"/>
</dbReference>
<dbReference type="InterPro" id="IPR020900">
    <property type="entry name" value="Arg_repress_DNA-bd"/>
</dbReference>
<dbReference type="InterPro" id="IPR036388">
    <property type="entry name" value="WH-like_DNA-bd_sf"/>
</dbReference>
<dbReference type="InterPro" id="IPR036390">
    <property type="entry name" value="WH_DNA-bd_sf"/>
</dbReference>
<dbReference type="NCBIfam" id="TIGR01529">
    <property type="entry name" value="argR_whole"/>
    <property type="match status" value="1"/>
</dbReference>
<dbReference type="NCBIfam" id="NF003457">
    <property type="entry name" value="PRK05066.1"/>
    <property type="match status" value="1"/>
</dbReference>
<dbReference type="PANTHER" id="PTHR34471">
    <property type="entry name" value="ARGININE REPRESSOR"/>
    <property type="match status" value="1"/>
</dbReference>
<dbReference type="PANTHER" id="PTHR34471:SF1">
    <property type="entry name" value="ARGININE REPRESSOR"/>
    <property type="match status" value="1"/>
</dbReference>
<dbReference type="Pfam" id="PF01316">
    <property type="entry name" value="Arg_repressor"/>
    <property type="match status" value="1"/>
</dbReference>
<dbReference type="Pfam" id="PF02863">
    <property type="entry name" value="Arg_repressor_C"/>
    <property type="match status" value="1"/>
</dbReference>
<dbReference type="PRINTS" id="PR01467">
    <property type="entry name" value="ARGREPRESSOR"/>
</dbReference>
<dbReference type="SUPFAM" id="SSF55252">
    <property type="entry name" value="C-terminal domain of arginine repressor"/>
    <property type="match status" value="1"/>
</dbReference>
<dbReference type="SUPFAM" id="SSF46785">
    <property type="entry name" value="Winged helix' DNA-binding domain"/>
    <property type="match status" value="1"/>
</dbReference>
<feature type="chain" id="PRO_1000023598" description="Arginine repressor">
    <location>
        <begin position="1"/>
        <end position="156"/>
    </location>
</feature>
<comment type="function">
    <text evidence="1">Regulates arginine biosynthesis genes.</text>
</comment>
<comment type="pathway">
    <text>Amino-acid biosynthesis; L-arginine biosynthesis [regulation].</text>
</comment>
<comment type="subcellular location">
    <subcellularLocation>
        <location evidence="1">Cytoplasm</location>
    </subcellularLocation>
</comment>
<comment type="similarity">
    <text evidence="1">Belongs to the ArgR family.</text>
</comment>
<evidence type="ECO:0000255" key="1">
    <source>
        <dbReference type="HAMAP-Rule" id="MF_00173"/>
    </source>
</evidence>